<sequence>MSSQVVGIEPLYIKAEPASPDSPKGSSETETEPPVTLASGPAPARCLPGHKEEEDGEGAGSGEQGSGKLVLSSLPKRLCLVCGDVASGYHYGVASCEACKAFFKRTIQGSIEYSCPASNECEITKRRRKACQACRFTKCLRVGMLKEGVRLDRVRGGRQKYKRRPEVDPLPFPGPFPAGPLAVAGGPRKTAPVNALVSHLLVVEPEKLYAMPDPASPDGHLPAVATLCDLFDREIVVTISWAKSIPGFSSLSLSDQMSVLQSVWMEVLVLGVAQRSLPLQDELAFAEDLVLDEEGARAAGLGDLGAALLQLVRRLQALRLEREEYVLLKALALANSDSVHIEDAEAVEQLREALHEALLEYEAGRAGPGGGAERRRAGRLLLTLPLLRQTAGKVLAHFYGVKLEGKVPMHKLFLEMLEAMMD</sequence>
<name>ERR1_MOUSE</name>
<gene>
    <name type="primary">Esrra</name>
    <name type="synonym">Err1</name>
    <name type="synonym">Estrra</name>
    <name type="synonym">Nr3b1</name>
</gene>
<evidence type="ECO:0000250" key="1"/>
<evidence type="ECO:0000250" key="2">
    <source>
        <dbReference type="UniProtKB" id="P11474"/>
    </source>
</evidence>
<evidence type="ECO:0000255" key="3">
    <source>
        <dbReference type="PROSITE-ProRule" id="PRU00407"/>
    </source>
</evidence>
<evidence type="ECO:0000255" key="4">
    <source>
        <dbReference type="PROSITE-ProRule" id="PRU01189"/>
    </source>
</evidence>
<evidence type="ECO:0000256" key="5">
    <source>
        <dbReference type="SAM" id="MobiDB-lite"/>
    </source>
</evidence>
<evidence type="ECO:0000269" key="6">
    <source>
    </source>
</evidence>
<evidence type="ECO:0000269" key="7">
    <source>
    </source>
</evidence>
<evidence type="ECO:0000269" key="8">
    <source>
    </source>
</evidence>
<evidence type="ECO:0000269" key="9">
    <source>
    </source>
</evidence>
<evidence type="ECO:0000305" key="10"/>
<evidence type="ECO:0007744" key="11">
    <source>
    </source>
</evidence>
<evidence type="ECO:0007744" key="12">
    <source>
    </source>
</evidence>
<evidence type="ECO:0007829" key="13">
    <source>
        <dbReference type="PDB" id="8CEF"/>
    </source>
</evidence>
<organism>
    <name type="scientific">Mus musculus</name>
    <name type="common">Mouse</name>
    <dbReference type="NCBI Taxonomy" id="10090"/>
    <lineage>
        <taxon>Eukaryota</taxon>
        <taxon>Metazoa</taxon>
        <taxon>Chordata</taxon>
        <taxon>Craniata</taxon>
        <taxon>Vertebrata</taxon>
        <taxon>Euteleostomi</taxon>
        <taxon>Mammalia</taxon>
        <taxon>Eutheria</taxon>
        <taxon>Euarchontoglires</taxon>
        <taxon>Glires</taxon>
        <taxon>Rodentia</taxon>
        <taxon>Myomorpha</taxon>
        <taxon>Muroidea</taxon>
        <taxon>Muridae</taxon>
        <taxon>Murinae</taxon>
        <taxon>Mus</taxon>
        <taxon>Mus</taxon>
    </lineage>
</organism>
<protein>
    <recommendedName>
        <fullName>Steroid hormone receptor ERR1</fullName>
    </recommendedName>
    <alternativeName>
        <fullName>Estrogen receptor-like 1</fullName>
    </alternativeName>
    <alternativeName>
        <fullName>Estrogen-related receptor alpha</fullName>
        <shortName>ERR-alpha</shortName>
    </alternativeName>
    <alternativeName>
        <fullName>Nuclear receptor subfamily 3 group B member 1</fullName>
    </alternativeName>
</protein>
<reference key="1">
    <citation type="journal article" date="1997" name="Mol. Cell. Biol.">
        <title>The orphan nuclear receptor estrogen-related receptor alpha is a transcriptional regulator of the human medium-chain acyl coenzyme A dehydrogenase gene.</title>
        <authorList>
            <person name="Sladek R."/>
            <person name="Bader J.-A."/>
            <person name="Giguere V."/>
        </authorList>
    </citation>
    <scope>NUCLEOTIDE SEQUENCE [MRNA]</scope>
    <source>
        <strain>BALB/cJ</strain>
    </source>
</reference>
<reference key="2">
    <citation type="journal article" date="1997" name="J. Mol. Endocrinol.">
        <title>The mouse estrogen receptor-related orphan receptor alpha 1: molecular cloning and estrogen responsiveness.</title>
        <authorList>
            <person name="Shigeta H."/>
            <person name="Zuo W."/>
            <person name="Yang N."/>
            <person name="DiAugustine R."/>
            <person name="Teng C.T."/>
        </authorList>
    </citation>
    <scope>NUCLEOTIDE SEQUENCE [MRNA]</scope>
    <source>
        <tissue>Brain</tissue>
        <tissue>Kidney</tissue>
    </source>
</reference>
<reference key="3">
    <citation type="journal article" date="2005" name="Science">
        <title>The transcriptional landscape of the mammalian genome.</title>
        <authorList>
            <person name="Carninci P."/>
            <person name="Kasukawa T."/>
            <person name="Katayama S."/>
            <person name="Gough J."/>
            <person name="Frith M.C."/>
            <person name="Maeda N."/>
            <person name="Oyama R."/>
            <person name="Ravasi T."/>
            <person name="Lenhard B."/>
            <person name="Wells C."/>
            <person name="Kodzius R."/>
            <person name="Shimokawa K."/>
            <person name="Bajic V.B."/>
            <person name="Brenner S.E."/>
            <person name="Batalov S."/>
            <person name="Forrest A.R."/>
            <person name="Zavolan M."/>
            <person name="Davis M.J."/>
            <person name="Wilming L.G."/>
            <person name="Aidinis V."/>
            <person name="Allen J.E."/>
            <person name="Ambesi-Impiombato A."/>
            <person name="Apweiler R."/>
            <person name="Aturaliya R.N."/>
            <person name="Bailey T.L."/>
            <person name="Bansal M."/>
            <person name="Baxter L."/>
            <person name="Beisel K.W."/>
            <person name="Bersano T."/>
            <person name="Bono H."/>
            <person name="Chalk A.M."/>
            <person name="Chiu K.P."/>
            <person name="Choudhary V."/>
            <person name="Christoffels A."/>
            <person name="Clutterbuck D.R."/>
            <person name="Crowe M.L."/>
            <person name="Dalla E."/>
            <person name="Dalrymple B.P."/>
            <person name="de Bono B."/>
            <person name="Della Gatta G."/>
            <person name="di Bernardo D."/>
            <person name="Down T."/>
            <person name="Engstrom P."/>
            <person name="Fagiolini M."/>
            <person name="Faulkner G."/>
            <person name="Fletcher C.F."/>
            <person name="Fukushima T."/>
            <person name="Furuno M."/>
            <person name="Futaki S."/>
            <person name="Gariboldi M."/>
            <person name="Georgii-Hemming P."/>
            <person name="Gingeras T.R."/>
            <person name="Gojobori T."/>
            <person name="Green R.E."/>
            <person name="Gustincich S."/>
            <person name="Harbers M."/>
            <person name="Hayashi Y."/>
            <person name="Hensch T.K."/>
            <person name="Hirokawa N."/>
            <person name="Hill D."/>
            <person name="Huminiecki L."/>
            <person name="Iacono M."/>
            <person name="Ikeo K."/>
            <person name="Iwama A."/>
            <person name="Ishikawa T."/>
            <person name="Jakt M."/>
            <person name="Kanapin A."/>
            <person name="Katoh M."/>
            <person name="Kawasawa Y."/>
            <person name="Kelso J."/>
            <person name="Kitamura H."/>
            <person name="Kitano H."/>
            <person name="Kollias G."/>
            <person name="Krishnan S.P."/>
            <person name="Kruger A."/>
            <person name="Kummerfeld S.K."/>
            <person name="Kurochkin I.V."/>
            <person name="Lareau L.F."/>
            <person name="Lazarevic D."/>
            <person name="Lipovich L."/>
            <person name="Liu J."/>
            <person name="Liuni S."/>
            <person name="McWilliam S."/>
            <person name="Madan Babu M."/>
            <person name="Madera M."/>
            <person name="Marchionni L."/>
            <person name="Matsuda H."/>
            <person name="Matsuzawa S."/>
            <person name="Miki H."/>
            <person name="Mignone F."/>
            <person name="Miyake S."/>
            <person name="Morris K."/>
            <person name="Mottagui-Tabar S."/>
            <person name="Mulder N."/>
            <person name="Nakano N."/>
            <person name="Nakauchi H."/>
            <person name="Ng P."/>
            <person name="Nilsson R."/>
            <person name="Nishiguchi S."/>
            <person name="Nishikawa S."/>
            <person name="Nori F."/>
            <person name="Ohara O."/>
            <person name="Okazaki Y."/>
            <person name="Orlando V."/>
            <person name="Pang K.C."/>
            <person name="Pavan W.J."/>
            <person name="Pavesi G."/>
            <person name="Pesole G."/>
            <person name="Petrovsky N."/>
            <person name="Piazza S."/>
            <person name="Reed J."/>
            <person name="Reid J.F."/>
            <person name="Ring B.Z."/>
            <person name="Ringwald M."/>
            <person name="Rost B."/>
            <person name="Ruan Y."/>
            <person name="Salzberg S.L."/>
            <person name="Sandelin A."/>
            <person name="Schneider C."/>
            <person name="Schoenbach C."/>
            <person name="Sekiguchi K."/>
            <person name="Semple C.A."/>
            <person name="Seno S."/>
            <person name="Sessa L."/>
            <person name="Sheng Y."/>
            <person name="Shibata Y."/>
            <person name="Shimada H."/>
            <person name="Shimada K."/>
            <person name="Silva D."/>
            <person name="Sinclair B."/>
            <person name="Sperling S."/>
            <person name="Stupka E."/>
            <person name="Sugiura K."/>
            <person name="Sultana R."/>
            <person name="Takenaka Y."/>
            <person name="Taki K."/>
            <person name="Tammoja K."/>
            <person name="Tan S.L."/>
            <person name="Tang S."/>
            <person name="Taylor M.S."/>
            <person name="Tegner J."/>
            <person name="Teichmann S.A."/>
            <person name="Ueda H.R."/>
            <person name="van Nimwegen E."/>
            <person name="Verardo R."/>
            <person name="Wei C.L."/>
            <person name="Yagi K."/>
            <person name="Yamanishi H."/>
            <person name="Zabarovsky E."/>
            <person name="Zhu S."/>
            <person name="Zimmer A."/>
            <person name="Hide W."/>
            <person name="Bult C."/>
            <person name="Grimmond S.M."/>
            <person name="Teasdale R.D."/>
            <person name="Liu E.T."/>
            <person name="Brusic V."/>
            <person name="Quackenbush J."/>
            <person name="Wahlestedt C."/>
            <person name="Mattick J.S."/>
            <person name="Hume D.A."/>
            <person name="Kai C."/>
            <person name="Sasaki D."/>
            <person name="Tomaru Y."/>
            <person name="Fukuda S."/>
            <person name="Kanamori-Katayama M."/>
            <person name="Suzuki M."/>
            <person name="Aoki J."/>
            <person name="Arakawa T."/>
            <person name="Iida J."/>
            <person name="Imamura K."/>
            <person name="Itoh M."/>
            <person name="Kato T."/>
            <person name="Kawaji H."/>
            <person name="Kawagashira N."/>
            <person name="Kawashima T."/>
            <person name="Kojima M."/>
            <person name="Kondo S."/>
            <person name="Konno H."/>
            <person name="Nakano K."/>
            <person name="Ninomiya N."/>
            <person name="Nishio T."/>
            <person name="Okada M."/>
            <person name="Plessy C."/>
            <person name="Shibata K."/>
            <person name="Shiraki T."/>
            <person name="Suzuki S."/>
            <person name="Tagami M."/>
            <person name="Waki K."/>
            <person name="Watahiki A."/>
            <person name="Okamura-Oho Y."/>
            <person name="Suzuki H."/>
            <person name="Kawai J."/>
            <person name="Hayashizaki Y."/>
        </authorList>
    </citation>
    <scope>NUCLEOTIDE SEQUENCE [LARGE SCALE MRNA]</scope>
    <source>
        <strain>NOD</strain>
        <tissue>Spleen</tissue>
    </source>
</reference>
<reference key="4">
    <citation type="journal article" date="2004" name="Genome Res.">
        <title>The status, quality, and expansion of the NIH full-length cDNA project: the Mammalian Gene Collection (MGC).</title>
        <authorList>
            <consortium name="The MGC Project Team"/>
        </authorList>
    </citation>
    <scope>NUCLEOTIDE SEQUENCE [LARGE SCALE MRNA]</scope>
    <source>
        <tissue>Brain</tissue>
    </source>
</reference>
<reference key="5">
    <citation type="journal article" date="2003" name="Mol. Cell. Biol.">
        <title>Reduced fat mass in mice lacking orphan nuclear receptor estrogen-related receptor alpha.</title>
        <authorList>
            <person name="Luo J."/>
            <person name="Sladek R."/>
            <person name="Carrier J."/>
            <person name="Bader J.A."/>
            <person name="Richard D."/>
            <person name="Giguere V."/>
        </authorList>
    </citation>
    <scope>DISRUPTION PHENOTYPE</scope>
</reference>
<reference key="6">
    <citation type="journal article" date="2007" name="Proc. Natl. Acad. Sci. U.S.A.">
        <title>Large-scale phosphorylation analysis of mouse liver.</title>
        <authorList>
            <person name="Villen J."/>
            <person name="Beausoleil S.A."/>
            <person name="Gerber S.A."/>
            <person name="Gygi S.P."/>
        </authorList>
    </citation>
    <scope>PHOSPHORYLATION [LARGE SCALE ANALYSIS] AT SER-19</scope>
    <scope>IDENTIFICATION BY MASS SPECTROMETRY [LARGE SCALE ANALYSIS]</scope>
    <source>
        <tissue>Liver</tissue>
    </source>
</reference>
<reference key="7">
    <citation type="journal article" date="2008" name="Mol. Endocrinol.">
        <title>Phosphorylation-dependent sumoylation regulates estrogen-related receptor-alpha and -gamma transcriptional activity through a synergy control motif.</title>
        <authorList>
            <person name="Tremblay A.M."/>
            <person name="Wilson B.J."/>
            <person name="Yang X.-J."/>
            <person name="Giguere V."/>
        </authorList>
    </citation>
    <scope>SUMOYLATION</scope>
    <scope>PHOSPHORYLATION AT SER-19</scope>
</reference>
<reference key="8">
    <citation type="journal article" date="2010" name="Cell">
        <title>A tissue-specific atlas of mouse protein phosphorylation and expression.</title>
        <authorList>
            <person name="Huttlin E.L."/>
            <person name="Jedrychowski M.P."/>
            <person name="Elias J.E."/>
            <person name="Goswami T."/>
            <person name="Rad R."/>
            <person name="Beausoleil S.A."/>
            <person name="Villen J."/>
            <person name="Haas W."/>
            <person name="Sowa M.E."/>
            <person name="Gygi S.P."/>
        </authorList>
    </citation>
    <scope>PHOSPHORYLATION [LARGE SCALE ANALYSIS] AT SER-19 AND SER-22</scope>
    <scope>IDENTIFICATION BY MASS SPECTROMETRY [LARGE SCALE ANALYSIS]</scope>
    <source>
        <tissue>Brain</tissue>
        <tissue>Brown adipose tissue</tissue>
        <tissue>Heart</tissue>
        <tissue>Kidney</tissue>
        <tissue>Liver</tissue>
        <tissue>Lung</tissue>
        <tissue>Pancreas</tissue>
        <tissue>Spleen</tissue>
        <tissue>Testis</tissue>
    </source>
</reference>
<reference key="9">
    <citation type="journal article" date="2010" name="Mol. Endocrinol.">
        <title>An acetylation switch modulates the transcriptional activity of estrogen-related receptor alpha.</title>
        <authorList>
            <person name="Wilson B.J."/>
            <person name="Tremblay A.M."/>
            <person name="Deblois G."/>
            <person name="Sylvain-Drolet G."/>
            <person name="Giguere V."/>
        </authorList>
    </citation>
    <scope>ACETYLATION BY PCAF/KAT2B</scope>
    <scope>DEACETYLATION BY SIRT1 AND HDAC8</scope>
</reference>
<reference key="10">
    <citation type="journal article" date="2011" name="J. Biol. Chem.">
        <title>Extracellular signal-regulated kinase 8 (ERK8) controls estrogen-related receptor alpha (ERRalpha) cellular localization and inhibits its transcriptional activity.</title>
        <authorList>
            <person name="Rossi M."/>
            <person name="Colecchia D."/>
            <person name="Iavarone C."/>
            <person name="Strambi A."/>
            <person name="Piccioni F."/>
            <person name="Verrotti di Pianella A."/>
            <person name="Chiariello M."/>
        </authorList>
    </citation>
    <scope>INTERACTION WITH MAPK15</scope>
</reference>
<reference key="11">
    <citation type="journal article" date="2017" name="EMBO Mol. Med.">
        <title>GDF15 is a heart-derived hormone that regulates body growth.</title>
        <authorList>
            <person name="Wang T."/>
            <person name="Liu J."/>
            <person name="McDonald C."/>
            <person name="Lupino K."/>
            <person name="Zhai X."/>
            <person name="Wilkins B.J."/>
            <person name="Hakonarson H."/>
            <person name="Pei L."/>
        </authorList>
    </citation>
    <scope>DISRUPTION PHENOTYPE</scope>
</reference>
<comment type="function">
    <text evidence="1">Binds to an ERR-alpha response element (ERRE) containing a single consensus half-site, 5'-TNAAGGTCA-3'. Can bind to the medium-chain acyl coenzyme A dehydrogenase (MCAD) response element NRRE-1 and may act as an important regulator of MCAD promoter. Binds to the C1 region of the lactoferrin gene promoter. Requires dimerization and the coactivator, PGC-1A, for full activity. The ERRalpha/PGC1alpha complex is a regulator of energy metabolism. Induces the expression of PERM1 in the skeletal muscle (By similarity).</text>
</comment>
<comment type="subunit">
    <text evidence="1 8">Binds DNA as a monomer or a homodimer. Interacts (via the AF2 domain) with coactivator PPARGC1A (via the L3 motif); the interaction greatly enhances transcriptional activity of genes involved in energy metabolism. Interacts with PIAS4; the interaction enhances sumoylation (By similarity). Interacts with MAPK15; promotes re-localization of ESRRA to the cytoplasm through a XPO1-dependent mechanism then inhibits ESRRA transcriptional activity (PubMed:21190936).</text>
</comment>
<comment type="subcellular location">
    <subcellularLocation>
        <location evidence="2 3">Nucleus</location>
    </subcellularLocation>
    <subcellularLocation>
        <location evidence="2">Cytoplasm</location>
    </subcellularLocation>
    <text evidence="2">Co-localizes to the cytoplasm only in presence of MAPK15.</text>
</comment>
<comment type="tissue specificity">
    <text>Most highly expressed in kidney, heart, and brown adipocytes. Also found in uterus, cervix and vagina.</text>
</comment>
<comment type="developmental stage">
    <text>Expressed in an organ specific manner through mid- to late embryonic development with persistent high-level expression in brown adipose tissue and intestinal mucosa.</text>
</comment>
<comment type="induction">
    <text>Activated by diethylstilbestrol (DES) and estradiol in the uterus.</text>
</comment>
<comment type="PTM">
    <text evidence="1">Phosphorylation on Ser-19 enhances sumoylation on Lys-14 increasing repression of transcriptional activity.</text>
</comment>
<comment type="PTM">
    <text evidence="1">Sumoylated with SUMO2. Main site is Lys-14 which is enhanced by phosphorylation on Ser-19, cofactor activation, and by interaction with PIAS4. Sumoylation enhances repression of transcriptional activity, but has no effect on subcellular location nor on DNA binding (By similarity).</text>
</comment>
<comment type="PTM">
    <text evidence="1">Reversibly acetylated. Acetylation by PCAF/KAT2 at Lys-129, Lys-138, Lys-160 and Lys-162 and PCAF/KAT2 decreases transcriptional activity probably by inhibiting DNA-binding activity; deacetylation involves SIRT1 and HDAC8 and increases DNA-binding (By similarity).</text>
</comment>
<comment type="disruption phenotype">
    <text evidence="6 9">No visible phenotype; mice are viable, fertile and display no gross anatomical alterations, with the exception of reduced body weight and peripheral fat deposits. Mice are resistant to a high-fat diet-induced obesity. Cardiomyocyte-specific double konckout for ESRRA and ESRRG are slower at gaining weight, smaller and shorter from 5 to 7 days of age compared to controls. They show decreased absolute weight of most internal organs except the heart. They have about 70% decreased plasma IGF1 levels but normal plasma growth hormone levels. At 14-15 days, mutants develop lethal dilated cardiomyopathy and heart failure (PubMed:28572090).</text>
</comment>
<comment type="similarity">
    <text evidence="10">Belongs to the nuclear hormone receptor family. NR3 subfamily.</text>
</comment>
<dbReference type="EMBL" id="U85259">
    <property type="protein sequence ID" value="AAB51250.1"/>
    <property type="molecule type" value="mRNA"/>
</dbReference>
<dbReference type="EMBL" id="AK156371">
    <property type="protein sequence ID" value="BAE33690.1"/>
    <property type="molecule type" value="mRNA"/>
</dbReference>
<dbReference type="EMBL" id="BC138586">
    <property type="protein sequence ID" value="AAI38587.1"/>
    <property type="molecule type" value="mRNA"/>
</dbReference>
<dbReference type="EMBL" id="BC171958">
    <property type="protein sequence ID" value="AAI71958.1"/>
    <property type="molecule type" value="mRNA"/>
</dbReference>
<dbReference type="CCDS" id="CCDS29509.1"/>
<dbReference type="RefSeq" id="NP_031979.2">
    <property type="nucleotide sequence ID" value="NM_007953.3"/>
</dbReference>
<dbReference type="PDB" id="8CEF">
    <property type="method" value="X-ray"/>
    <property type="resolution" value="2.49 A"/>
    <property type="chains" value="C/D/G/H/J/K=50-170"/>
</dbReference>
<dbReference type="PDBsum" id="8CEF"/>
<dbReference type="SMR" id="O08580"/>
<dbReference type="BioGRID" id="204937">
    <property type="interactions" value="8"/>
</dbReference>
<dbReference type="FunCoup" id="O08580">
    <property type="interactions" value="1048"/>
</dbReference>
<dbReference type="IntAct" id="O08580">
    <property type="interactions" value="2"/>
</dbReference>
<dbReference type="STRING" id="10090.ENSMUSP00000025906"/>
<dbReference type="ChEMBL" id="CHEMBL1914280"/>
<dbReference type="DrugCentral" id="O08580"/>
<dbReference type="GuidetoPHARMACOLOGY" id="622"/>
<dbReference type="iPTMnet" id="O08580"/>
<dbReference type="PhosphoSitePlus" id="O08580"/>
<dbReference type="jPOST" id="O08580"/>
<dbReference type="PaxDb" id="10090-ENSMUSP00000025906"/>
<dbReference type="PeptideAtlas" id="O08580"/>
<dbReference type="ProteomicsDB" id="275675"/>
<dbReference type="Antibodypedia" id="7260">
    <property type="antibodies" value="597 antibodies from 40 providers"/>
</dbReference>
<dbReference type="DNASU" id="26379"/>
<dbReference type="Ensembl" id="ENSMUST00000025906.12">
    <property type="protein sequence ID" value="ENSMUSP00000025906.4"/>
    <property type="gene ID" value="ENSMUSG00000024955.16"/>
</dbReference>
<dbReference type="GeneID" id="26379"/>
<dbReference type="KEGG" id="mmu:26379"/>
<dbReference type="UCSC" id="uc008gjg.1">
    <property type="organism name" value="mouse"/>
</dbReference>
<dbReference type="AGR" id="MGI:1346831"/>
<dbReference type="CTD" id="2101"/>
<dbReference type="MGI" id="MGI:1346831">
    <property type="gene designation" value="Esrra"/>
</dbReference>
<dbReference type="VEuPathDB" id="HostDB:ENSMUSG00000024955"/>
<dbReference type="eggNOG" id="KOG3575">
    <property type="taxonomic scope" value="Eukaryota"/>
</dbReference>
<dbReference type="GeneTree" id="ENSGT00940000160341"/>
<dbReference type="HOGENOM" id="CLU_007368_11_0_1"/>
<dbReference type="InParanoid" id="O08580"/>
<dbReference type="OMA" id="ASNVCEI"/>
<dbReference type="OrthoDB" id="83365at9989"/>
<dbReference type="PhylomeDB" id="O08580"/>
<dbReference type="TreeFam" id="TF323751"/>
<dbReference type="Reactome" id="R-MMU-383280">
    <property type="pathway name" value="Nuclear Receptor transcription pathway"/>
</dbReference>
<dbReference type="BioGRID-ORCS" id="26379">
    <property type="hits" value="7 hits in 83 CRISPR screens"/>
</dbReference>
<dbReference type="ChiTaRS" id="Esrra">
    <property type="organism name" value="mouse"/>
</dbReference>
<dbReference type="PRO" id="PR:O08580"/>
<dbReference type="Proteomes" id="UP000000589">
    <property type="component" value="Chromosome 19"/>
</dbReference>
<dbReference type="RNAct" id="O08580">
    <property type="molecule type" value="protein"/>
</dbReference>
<dbReference type="Bgee" id="ENSMUSG00000024955">
    <property type="expression patterns" value="Expressed in small intestine Peyer's patch and 289 other cell types or tissues"/>
</dbReference>
<dbReference type="ExpressionAtlas" id="O08580">
    <property type="expression patterns" value="baseline and differential"/>
</dbReference>
<dbReference type="GO" id="GO:0005737">
    <property type="term" value="C:cytoplasm"/>
    <property type="evidence" value="ECO:0000250"/>
    <property type="project" value="UniProtKB"/>
</dbReference>
<dbReference type="GO" id="GO:0001650">
    <property type="term" value="C:fibrillar center"/>
    <property type="evidence" value="ECO:0007669"/>
    <property type="project" value="Ensembl"/>
</dbReference>
<dbReference type="GO" id="GO:0045171">
    <property type="term" value="C:intercellular bridge"/>
    <property type="evidence" value="ECO:0007669"/>
    <property type="project" value="Ensembl"/>
</dbReference>
<dbReference type="GO" id="GO:0015630">
    <property type="term" value="C:microtubule cytoskeleton"/>
    <property type="evidence" value="ECO:0007669"/>
    <property type="project" value="Ensembl"/>
</dbReference>
<dbReference type="GO" id="GO:0005654">
    <property type="term" value="C:nucleoplasm"/>
    <property type="evidence" value="ECO:0007669"/>
    <property type="project" value="Ensembl"/>
</dbReference>
<dbReference type="GO" id="GO:0005634">
    <property type="term" value="C:nucleus"/>
    <property type="evidence" value="ECO:0000314"/>
    <property type="project" value="MGI"/>
</dbReference>
<dbReference type="GO" id="GO:0001228">
    <property type="term" value="F:DNA-binding transcription activator activity, RNA polymerase II-specific"/>
    <property type="evidence" value="ECO:0000314"/>
    <property type="project" value="NTNU_SB"/>
</dbReference>
<dbReference type="GO" id="GO:0003700">
    <property type="term" value="F:DNA-binding transcription factor activity"/>
    <property type="evidence" value="ECO:0000314"/>
    <property type="project" value="MGI"/>
</dbReference>
<dbReference type="GO" id="GO:0001227">
    <property type="term" value="F:DNA-binding transcription repressor activity, RNA polymerase II-specific"/>
    <property type="evidence" value="ECO:0000314"/>
    <property type="project" value="NTNU_SB"/>
</dbReference>
<dbReference type="GO" id="GO:0003707">
    <property type="term" value="F:nuclear steroid receptor activity"/>
    <property type="evidence" value="ECO:0007669"/>
    <property type="project" value="InterPro"/>
</dbReference>
<dbReference type="GO" id="GO:0019904">
    <property type="term" value="F:protein domain specific binding"/>
    <property type="evidence" value="ECO:0007669"/>
    <property type="project" value="Ensembl"/>
</dbReference>
<dbReference type="GO" id="GO:0000978">
    <property type="term" value="F:RNA polymerase II cis-regulatory region sequence-specific DNA binding"/>
    <property type="evidence" value="ECO:0000314"/>
    <property type="project" value="NTNU_SB"/>
</dbReference>
<dbReference type="GO" id="GO:0043565">
    <property type="term" value="F:sequence-specific DNA binding"/>
    <property type="evidence" value="ECO:0000250"/>
    <property type="project" value="UniProtKB"/>
</dbReference>
<dbReference type="GO" id="GO:0005496">
    <property type="term" value="F:steroid binding"/>
    <property type="evidence" value="ECO:0007669"/>
    <property type="project" value="InterPro"/>
</dbReference>
<dbReference type="GO" id="GO:0008270">
    <property type="term" value="F:zinc ion binding"/>
    <property type="evidence" value="ECO:0007669"/>
    <property type="project" value="UniProtKB-KW"/>
</dbReference>
<dbReference type="GO" id="GO:0000122">
    <property type="term" value="P:negative regulation of transcription by RNA polymerase II"/>
    <property type="evidence" value="ECO:0000314"/>
    <property type="project" value="NTNU_SB"/>
</dbReference>
<dbReference type="GO" id="GO:0045944">
    <property type="term" value="P:positive regulation of transcription by RNA polymerase II"/>
    <property type="evidence" value="ECO:0000314"/>
    <property type="project" value="NTNU_SB"/>
</dbReference>
<dbReference type="GO" id="GO:0006355">
    <property type="term" value="P:regulation of DNA-templated transcription"/>
    <property type="evidence" value="ECO:0000250"/>
    <property type="project" value="UniProtKB"/>
</dbReference>
<dbReference type="CDD" id="cd07170">
    <property type="entry name" value="NR_DBD_ERR"/>
    <property type="match status" value="1"/>
</dbReference>
<dbReference type="CDD" id="cd06946">
    <property type="entry name" value="NR_LBD_ERR"/>
    <property type="match status" value="1"/>
</dbReference>
<dbReference type="FunFam" id="3.30.50.10:FF:000008">
    <property type="entry name" value="estrogen-related receptor gamma isoform X1"/>
    <property type="match status" value="1"/>
</dbReference>
<dbReference type="FunFam" id="1.10.565.10:FF:000023">
    <property type="entry name" value="Steroid hormone receptor ERR1"/>
    <property type="match status" value="1"/>
</dbReference>
<dbReference type="Gene3D" id="3.30.50.10">
    <property type="entry name" value="Erythroid Transcription Factor GATA-1, subunit A"/>
    <property type="match status" value="1"/>
</dbReference>
<dbReference type="Gene3D" id="1.10.565.10">
    <property type="entry name" value="Retinoid X Receptor"/>
    <property type="match status" value="1"/>
</dbReference>
<dbReference type="InterPro" id="IPR024178">
    <property type="entry name" value="Est_rcpt/est-rel_rcp"/>
</dbReference>
<dbReference type="InterPro" id="IPR035500">
    <property type="entry name" value="NHR-like_dom_sf"/>
</dbReference>
<dbReference type="InterPro" id="IPR000536">
    <property type="entry name" value="Nucl_hrmn_rcpt_lig-bd"/>
</dbReference>
<dbReference type="InterPro" id="IPR050200">
    <property type="entry name" value="Nuclear_hormone_rcpt_NR3"/>
</dbReference>
<dbReference type="InterPro" id="IPR001723">
    <property type="entry name" value="Nuclear_hrmn_rcpt"/>
</dbReference>
<dbReference type="InterPro" id="IPR027289">
    <property type="entry name" value="Oest-rel_rcp"/>
</dbReference>
<dbReference type="InterPro" id="IPR001628">
    <property type="entry name" value="Znf_hrmn_rcpt"/>
</dbReference>
<dbReference type="InterPro" id="IPR013088">
    <property type="entry name" value="Znf_NHR/GATA"/>
</dbReference>
<dbReference type="PANTHER" id="PTHR48092">
    <property type="entry name" value="KNIRPS-RELATED PROTEIN-RELATED"/>
    <property type="match status" value="1"/>
</dbReference>
<dbReference type="Pfam" id="PF00104">
    <property type="entry name" value="Hormone_recep"/>
    <property type="match status" value="1"/>
</dbReference>
<dbReference type="Pfam" id="PF00105">
    <property type="entry name" value="zf-C4"/>
    <property type="match status" value="1"/>
</dbReference>
<dbReference type="PIRSF" id="PIRSF002527">
    <property type="entry name" value="ER-like_NR"/>
    <property type="match status" value="1"/>
</dbReference>
<dbReference type="PIRSF" id="PIRSF500939">
    <property type="entry name" value="ERR1-2-3"/>
    <property type="match status" value="1"/>
</dbReference>
<dbReference type="PRINTS" id="PR00398">
    <property type="entry name" value="STRDHORMONER"/>
</dbReference>
<dbReference type="PRINTS" id="PR00047">
    <property type="entry name" value="STROIDFINGER"/>
</dbReference>
<dbReference type="SMART" id="SM00430">
    <property type="entry name" value="HOLI"/>
    <property type="match status" value="1"/>
</dbReference>
<dbReference type="SMART" id="SM00399">
    <property type="entry name" value="ZnF_C4"/>
    <property type="match status" value="1"/>
</dbReference>
<dbReference type="SUPFAM" id="SSF57716">
    <property type="entry name" value="Glucocorticoid receptor-like (DNA-binding domain)"/>
    <property type="match status" value="1"/>
</dbReference>
<dbReference type="SUPFAM" id="SSF48508">
    <property type="entry name" value="Nuclear receptor ligand-binding domain"/>
    <property type="match status" value="1"/>
</dbReference>
<dbReference type="PROSITE" id="PS51843">
    <property type="entry name" value="NR_LBD"/>
    <property type="match status" value="1"/>
</dbReference>
<dbReference type="PROSITE" id="PS00031">
    <property type="entry name" value="NUCLEAR_REC_DBD_1"/>
    <property type="match status" value="1"/>
</dbReference>
<dbReference type="PROSITE" id="PS51030">
    <property type="entry name" value="NUCLEAR_REC_DBD_2"/>
    <property type="match status" value="1"/>
</dbReference>
<proteinExistence type="evidence at protein level"/>
<feature type="chain" id="PRO_0000053661" description="Steroid hormone receptor ERR1">
    <location>
        <begin position="1"/>
        <end position="422"/>
    </location>
</feature>
<feature type="domain" description="NR LBD" evidence="4">
    <location>
        <begin position="192"/>
        <end position="420"/>
    </location>
</feature>
<feature type="DNA-binding region" description="Nuclear receptor" evidence="3">
    <location>
        <begin position="76"/>
        <end position="151"/>
    </location>
</feature>
<feature type="zinc finger region" description="NR C4-type" evidence="3">
    <location>
        <begin position="79"/>
        <end position="99"/>
    </location>
</feature>
<feature type="zinc finger region" description="NR C4-type" evidence="3">
    <location>
        <begin position="115"/>
        <end position="134"/>
    </location>
</feature>
<feature type="region of interest" description="Repressor domain">
    <location>
        <begin position="1"/>
        <end position="76"/>
    </location>
</feature>
<feature type="region of interest" description="Disordered" evidence="5">
    <location>
        <begin position="1"/>
        <end position="66"/>
    </location>
</feature>
<feature type="region of interest" description="AF-2 domain" evidence="1">
    <location>
        <begin position="402"/>
        <end position="422"/>
    </location>
</feature>
<feature type="site" description="Required for DNA-dependent dimerization" evidence="1">
    <location>
        <position position="124"/>
    </location>
</feature>
<feature type="modified residue" description="Phosphoserine" evidence="7 11 12">
    <location>
        <position position="19"/>
    </location>
</feature>
<feature type="modified residue" description="Phosphoserine" evidence="12">
    <location>
        <position position="22"/>
    </location>
</feature>
<feature type="modified residue" description="N6-acetyllysine; by PCAF/KAT2B" evidence="2">
    <location>
        <position position="129"/>
    </location>
</feature>
<feature type="modified residue" description="N6-acetyllysine; by PCAF/KAT2B" evidence="2">
    <location>
        <position position="138"/>
    </location>
</feature>
<feature type="modified residue" description="N6-acetyllysine; by PCAF/KAT2B" evidence="2">
    <location>
        <position position="160"/>
    </location>
</feature>
<feature type="modified residue" description="N6-acetyllysine; by PCAF/KAT2B" evidence="2">
    <location>
        <position position="162"/>
    </location>
</feature>
<feature type="cross-link" description="Glycyl lysine isopeptide (Lys-Gly) (interchain with G-Cter in SUMO)" evidence="1">
    <location>
        <position position="14"/>
    </location>
</feature>
<feature type="cross-link" description="Glycyl lysine isopeptide (Lys-Gly) (interchain with G-Cter in SUMO2)" evidence="2">
    <location>
        <position position="189"/>
    </location>
</feature>
<feature type="cross-link" description="Glycyl lysine isopeptide (Lys-Gly) (interchain with G-Cter in SUMO); alternate" evidence="1">
    <location>
        <position position="402"/>
    </location>
</feature>
<feature type="cross-link" description="Glycyl lysine isopeptide (Lys-Gly) (interchain with G-Cter in SUMO2); alternate" evidence="2">
    <location>
        <position position="402"/>
    </location>
</feature>
<feature type="sequence conflict" description="In Ref. 1; AAB51250." evidence="10" ref="1">
    <original>R</original>
    <variation>G</variation>
    <location>
        <position position="275"/>
    </location>
</feature>
<feature type="sequence conflict" description="In Ref. 1; AAB51250." evidence="10" ref="1">
    <location>
        <position position="308"/>
    </location>
</feature>
<feature type="sequence conflict" description="In Ref. 1; AAB51250." evidence="10" ref="1">
    <original>PMHKL</original>
    <variation>HAQV</variation>
    <location>
        <begin position="408"/>
        <end position="412"/>
    </location>
</feature>
<feature type="turn" evidence="13">
    <location>
        <begin position="80"/>
        <end position="82"/>
    </location>
</feature>
<feature type="strand" evidence="13">
    <location>
        <begin position="88"/>
        <end position="90"/>
    </location>
</feature>
<feature type="strand" evidence="13">
    <location>
        <begin position="93"/>
        <end position="95"/>
    </location>
</feature>
<feature type="helix" evidence="13">
    <location>
        <begin position="97"/>
        <end position="109"/>
    </location>
</feature>
<feature type="strand" evidence="13">
    <location>
        <begin position="116"/>
        <end position="119"/>
    </location>
</feature>
<feature type="helix" evidence="13">
    <location>
        <begin position="127"/>
        <end position="129"/>
    </location>
</feature>
<feature type="helix" evidence="13">
    <location>
        <begin position="132"/>
        <end position="142"/>
    </location>
</feature>
<feature type="helix" evidence="13">
    <location>
        <begin position="146"/>
        <end position="148"/>
    </location>
</feature>
<keyword id="KW-0002">3D-structure</keyword>
<keyword id="KW-0007">Acetylation</keyword>
<keyword id="KW-0963">Cytoplasm</keyword>
<keyword id="KW-0238">DNA-binding</keyword>
<keyword id="KW-1017">Isopeptide bond</keyword>
<keyword id="KW-0479">Metal-binding</keyword>
<keyword id="KW-0539">Nucleus</keyword>
<keyword id="KW-0597">Phosphoprotein</keyword>
<keyword id="KW-0675">Receptor</keyword>
<keyword id="KW-1185">Reference proteome</keyword>
<keyword id="KW-0804">Transcription</keyword>
<keyword id="KW-0805">Transcription regulation</keyword>
<keyword id="KW-0832">Ubl conjugation</keyword>
<keyword id="KW-0862">Zinc</keyword>
<keyword id="KW-0863">Zinc-finger</keyword>
<accession>O08580</accession>
<accession>B2RRU9</accession>
<accession>Q3U110</accession>